<organism>
    <name type="scientific">Cupriavidus necator (strain ATCC 17699 / DSM 428 / KCTC 22496 / NCIMB 10442 / H16 / Stanier 337)</name>
    <name type="common">Ralstonia eutropha</name>
    <dbReference type="NCBI Taxonomy" id="381666"/>
    <lineage>
        <taxon>Bacteria</taxon>
        <taxon>Pseudomonadati</taxon>
        <taxon>Pseudomonadota</taxon>
        <taxon>Betaproteobacteria</taxon>
        <taxon>Burkholderiales</taxon>
        <taxon>Burkholderiaceae</taxon>
        <taxon>Cupriavidus</taxon>
    </lineage>
</organism>
<proteinExistence type="inferred from homology"/>
<feature type="chain" id="PRO_1000018099" description="Arginine--tRNA ligase">
    <location>
        <begin position="1"/>
        <end position="595"/>
    </location>
</feature>
<feature type="short sequence motif" description="'HIGH' region">
    <location>
        <begin position="132"/>
        <end position="142"/>
    </location>
</feature>
<comment type="catalytic activity">
    <reaction evidence="1">
        <text>tRNA(Arg) + L-arginine + ATP = L-arginyl-tRNA(Arg) + AMP + diphosphate</text>
        <dbReference type="Rhea" id="RHEA:20301"/>
        <dbReference type="Rhea" id="RHEA-COMP:9658"/>
        <dbReference type="Rhea" id="RHEA-COMP:9673"/>
        <dbReference type="ChEBI" id="CHEBI:30616"/>
        <dbReference type="ChEBI" id="CHEBI:32682"/>
        <dbReference type="ChEBI" id="CHEBI:33019"/>
        <dbReference type="ChEBI" id="CHEBI:78442"/>
        <dbReference type="ChEBI" id="CHEBI:78513"/>
        <dbReference type="ChEBI" id="CHEBI:456215"/>
        <dbReference type="EC" id="6.1.1.19"/>
    </reaction>
</comment>
<comment type="subunit">
    <text evidence="1">Monomer.</text>
</comment>
<comment type="subcellular location">
    <subcellularLocation>
        <location evidence="1">Cytoplasm</location>
    </subcellularLocation>
</comment>
<comment type="similarity">
    <text evidence="1">Belongs to the class-I aminoacyl-tRNA synthetase family.</text>
</comment>
<name>SYR_CUPNH</name>
<reference key="1">
    <citation type="journal article" date="2006" name="Nat. Biotechnol.">
        <title>Genome sequence of the bioplastic-producing 'Knallgas' bacterium Ralstonia eutropha H16.</title>
        <authorList>
            <person name="Pohlmann A."/>
            <person name="Fricke W.F."/>
            <person name="Reinecke F."/>
            <person name="Kusian B."/>
            <person name="Liesegang H."/>
            <person name="Cramm R."/>
            <person name="Eitinger T."/>
            <person name="Ewering C."/>
            <person name="Poetter M."/>
            <person name="Schwartz E."/>
            <person name="Strittmatter A."/>
            <person name="Voss I."/>
            <person name="Gottschalk G."/>
            <person name="Steinbuechel A."/>
            <person name="Friedrich B."/>
            <person name="Bowien B."/>
        </authorList>
    </citation>
    <scope>NUCLEOTIDE SEQUENCE [LARGE SCALE GENOMIC DNA]</scope>
    <source>
        <strain>ATCC 17699 / DSM 428 / KCTC 22496 / NCIMB 10442 / H16 / Stanier 337</strain>
    </source>
</reference>
<evidence type="ECO:0000255" key="1">
    <source>
        <dbReference type="HAMAP-Rule" id="MF_00123"/>
    </source>
</evidence>
<dbReference type="EC" id="6.1.1.19" evidence="1"/>
<dbReference type="EMBL" id="AM260479">
    <property type="protein sequence ID" value="CAJ91311.1"/>
    <property type="molecule type" value="Genomic_DNA"/>
</dbReference>
<dbReference type="RefSeq" id="WP_010812880.1">
    <property type="nucleotide sequence ID" value="NZ_CP039287.1"/>
</dbReference>
<dbReference type="SMR" id="Q0KFB0"/>
<dbReference type="STRING" id="381666.H16_A0159"/>
<dbReference type="KEGG" id="reh:H16_A0159"/>
<dbReference type="eggNOG" id="COG0018">
    <property type="taxonomic scope" value="Bacteria"/>
</dbReference>
<dbReference type="HOGENOM" id="CLU_006406_0_1_4"/>
<dbReference type="OrthoDB" id="9803211at2"/>
<dbReference type="Proteomes" id="UP000008210">
    <property type="component" value="Chromosome 1"/>
</dbReference>
<dbReference type="GO" id="GO:0005737">
    <property type="term" value="C:cytoplasm"/>
    <property type="evidence" value="ECO:0007669"/>
    <property type="project" value="UniProtKB-SubCell"/>
</dbReference>
<dbReference type="GO" id="GO:0004814">
    <property type="term" value="F:arginine-tRNA ligase activity"/>
    <property type="evidence" value="ECO:0007669"/>
    <property type="project" value="UniProtKB-UniRule"/>
</dbReference>
<dbReference type="GO" id="GO:0005524">
    <property type="term" value="F:ATP binding"/>
    <property type="evidence" value="ECO:0007669"/>
    <property type="project" value="UniProtKB-UniRule"/>
</dbReference>
<dbReference type="GO" id="GO:0006420">
    <property type="term" value="P:arginyl-tRNA aminoacylation"/>
    <property type="evidence" value="ECO:0007669"/>
    <property type="project" value="UniProtKB-UniRule"/>
</dbReference>
<dbReference type="CDD" id="cd07956">
    <property type="entry name" value="Anticodon_Ia_Arg"/>
    <property type="match status" value="1"/>
</dbReference>
<dbReference type="CDD" id="cd00671">
    <property type="entry name" value="ArgRS_core"/>
    <property type="match status" value="1"/>
</dbReference>
<dbReference type="FunFam" id="1.10.730.10:FF:000008">
    <property type="entry name" value="Arginine--tRNA ligase"/>
    <property type="match status" value="1"/>
</dbReference>
<dbReference type="FunFam" id="3.40.50.620:FF:000062">
    <property type="entry name" value="Arginine--tRNA ligase"/>
    <property type="match status" value="1"/>
</dbReference>
<dbReference type="Gene3D" id="3.30.1360.70">
    <property type="entry name" value="Arginyl tRNA synthetase N-terminal domain"/>
    <property type="match status" value="1"/>
</dbReference>
<dbReference type="Gene3D" id="3.40.50.620">
    <property type="entry name" value="HUPs"/>
    <property type="match status" value="1"/>
</dbReference>
<dbReference type="Gene3D" id="1.10.730.10">
    <property type="entry name" value="Isoleucyl-tRNA Synthetase, Domain 1"/>
    <property type="match status" value="1"/>
</dbReference>
<dbReference type="HAMAP" id="MF_00123">
    <property type="entry name" value="Arg_tRNA_synth"/>
    <property type="match status" value="1"/>
</dbReference>
<dbReference type="InterPro" id="IPR001412">
    <property type="entry name" value="aa-tRNA-synth_I_CS"/>
</dbReference>
<dbReference type="InterPro" id="IPR001278">
    <property type="entry name" value="Arg-tRNA-ligase"/>
</dbReference>
<dbReference type="InterPro" id="IPR005148">
    <property type="entry name" value="Arg-tRNA-synth_N"/>
</dbReference>
<dbReference type="InterPro" id="IPR036695">
    <property type="entry name" value="Arg-tRNA-synth_N_sf"/>
</dbReference>
<dbReference type="InterPro" id="IPR035684">
    <property type="entry name" value="ArgRS_core"/>
</dbReference>
<dbReference type="InterPro" id="IPR008909">
    <property type="entry name" value="DALR_anticod-bd"/>
</dbReference>
<dbReference type="InterPro" id="IPR014729">
    <property type="entry name" value="Rossmann-like_a/b/a_fold"/>
</dbReference>
<dbReference type="InterPro" id="IPR009080">
    <property type="entry name" value="tRNAsynth_Ia_anticodon-bd"/>
</dbReference>
<dbReference type="NCBIfam" id="TIGR00456">
    <property type="entry name" value="argS"/>
    <property type="match status" value="1"/>
</dbReference>
<dbReference type="PANTHER" id="PTHR11956:SF5">
    <property type="entry name" value="ARGININE--TRNA LIGASE, CYTOPLASMIC"/>
    <property type="match status" value="1"/>
</dbReference>
<dbReference type="PANTHER" id="PTHR11956">
    <property type="entry name" value="ARGINYL-TRNA SYNTHETASE"/>
    <property type="match status" value="1"/>
</dbReference>
<dbReference type="Pfam" id="PF03485">
    <property type="entry name" value="Arg_tRNA_synt_N"/>
    <property type="match status" value="1"/>
</dbReference>
<dbReference type="Pfam" id="PF05746">
    <property type="entry name" value="DALR_1"/>
    <property type="match status" value="1"/>
</dbReference>
<dbReference type="Pfam" id="PF00750">
    <property type="entry name" value="tRNA-synt_1d"/>
    <property type="match status" value="1"/>
</dbReference>
<dbReference type="PRINTS" id="PR01038">
    <property type="entry name" value="TRNASYNTHARG"/>
</dbReference>
<dbReference type="SMART" id="SM01016">
    <property type="entry name" value="Arg_tRNA_synt_N"/>
    <property type="match status" value="1"/>
</dbReference>
<dbReference type="SMART" id="SM00836">
    <property type="entry name" value="DALR_1"/>
    <property type="match status" value="1"/>
</dbReference>
<dbReference type="SUPFAM" id="SSF47323">
    <property type="entry name" value="Anticodon-binding domain of a subclass of class I aminoacyl-tRNA synthetases"/>
    <property type="match status" value="1"/>
</dbReference>
<dbReference type="SUPFAM" id="SSF55190">
    <property type="entry name" value="Arginyl-tRNA synthetase (ArgRS), N-terminal 'additional' domain"/>
    <property type="match status" value="1"/>
</dbReference>
<dbReference type="SUPFAM" id="SSF52374">
    <property type="entry name" value="Nucleotidylyl transferase"/>
    <property type="match status" value="1"/>
</dbReference>
<dbReference type="PROSITE" id="PS00178">
    <property type="entry name" value="AA_TRNA_LIGASE_I"/>
    <property type="match status" value="1"/>
</dbReference>
<keyword id="KW-0030">Aminoacyl-tRNA synthetase</keyword>
<keyword id="KW-0067">ATP-binding</keyword>
<keyword id="KW-0963">Cytoplasm</keyword>
<keyword id="KW-0436">Ligase</keyword>
<keyword id="KW-0547">Nucleotide-binding</keyword>
<keyword id="KW-0648">Protein biosynthesis</keyword>
<keyword id="KW-1185">Reference proteome</keyword>
<accession>Q0KFB0</accession>
<protein>
    <recommendedName>
        <fullName evidence="1">Arginine--tRNA ligase</fullName>
        <ecNumber evidence="1">6.1.1.19</ecNumber>
    </recommendedName>
    <alternativeName>
        <fullName evidence="1">Arginyl-tRNA synthetase</fullName>
        <shortName evidence="1">ArgRS</shortName>
    </alternativeName>
</protein>
<gene>
    <name evidence="1" type="primary">argS</name>
    <name type="ordered locus">H16_A0159</name>
</gene>
<sequence length="595" mass="64725">MLPVQTSNLAAAFTDAVRALAPADATLPAVTFERPKVAAHGDLACNVAMQVARALKSNPRELAQRIVDAVQADTRAQGLVQAMEIAGPGFINLRLTPAAKADVLRAVLAEGDHYGARERGVHGQVLVEFVSANPTGPLHVGHGRQAALGDALANLLSWQGWHVHREFYYNDAGVQIQTLALSVQARARGLKPGDASWPEAAYNGDYIADIAADFLAGKTVSASDGEPVTASGNVEDIDSIRKFAVTYLRNEQDIDLQAFGVKFDRYYLESSLYSDGRVEAAVQSLVGKGKTYESEGALWLRTTDDGDDKDRVMKKSDGTYTYFVPDVAYHTTKWERGFTKVINVQGSDHHGTIARVRAGLQGLDMGIPQGYPDYVLHKMVTVMKNGEEVKISKRAGSYVTVRDLIEWSNGGDETIRGCLDTGVADWPQHFTRGRDAVRFFLLSRKADTEFVFDVDLALKQNDENPVYYVQYAHARICSIFESWGGADWEARLAELAGADLSAVTGPEASAQAQALGRRLAEFPDMLSGAAAELAPHAVAFYLRDLAGDFHAFYNADRVLVDDEAVKRARLALLAATRQVLRNGLAVIGVSAPRRM</sequence>